<sequence length="172" mass="19028">MRTLVMVACAVSLAACSSPPKPPTVSGRHRIPINSPAAQEELRLQVFPQEPTAQATMWPARPPKQTVNVYFPQDVTVFRPTSAQINQLHTLLWPVPKHINVRGLTDNNCPPPGDTQVARVRALAIYNWLINQGVPASRITISYAPVKDYASNAPLSPGRVLNRRVDIEILRK</sequence>
<reference key="1">
    <citation type="journal article" date="2000" name="J. Bacteriol.">
        <title>A homologue of an operon required for DNA transfer in Agrobacterium is required in Brucella abortus for virulence and intracellular multiplication.</title>
        <authorList>
            <person name="Sieira R."/>
            <person name="Comerci D.J."/>
            <person name="Sanchez D.O."/>
            <person name="Ugalde R.A."/>
        </authorList>
    </citation>
    <scope>NUCLEOTIDE SEQUENCE [GENOMIC DNA]</scope>
    <scope>TRANSCRIPTION</scope>
    <scope>FUNCTION</scope>
</reference>
<reference key="2">
    <citation type="journal article" date="2005" name="Infect. Immun.">
        <title>Whole-genome analyses of speciation events in pathogenic Brucellae.</title>
        <authorList>
            <person name="Chain P.S."/>
            <person name="Comerci D.J."/>
            <person name="Tolmasky M.E."/>
            <person name="Larimer F.W."/>
            <person name="Malfatti S.A."/>
            <person name="Vergez L.M."/>
            <person name="Aguero F."/>
            <person name="Land M.L."/>
            <person name="Ugalde R.A."/>
            <person name="Garcia E."/>
        </authorList>
    </citation>
    <scope>NUCLEOTIDE SEQUENCE [LARGE SCALE GENOMIC DNA]</scope>
    <source>
        <strain>2308</strain>
    </source>
</reference>
<feature type="signal peptide" evidence="1">
    <location>
        <begin position="1"/>
        <end position="15"/>
    </location>
</feature>
<feature type="chain" id="PRO_0000291445" description="Type IV secretion system putative outer membrane lipoprotein BAB2_0057">
    <location>
        <begin position="16"/>
        <end position="172"/>
    </location>
</feature>
<feature type="domain" description="OmpA-like" evidence="2">
    <location>
        <begin position="58"/>
        <end position="172"/>
    </location>
</feature>
<feature type="lipid moiety-binding region" description="N-palmitoyl cysteine" evidence="1">
    <location>
        <position position="16"/>
    </location>
</feature>
<feature type="lipid moiety-binding region" description="S-diacylglycerol cysteine" evidence="1">
    <location>
        <position position="16"/>
    </location>
</feature>
<organism>
    <name type="scientific">Brucella abortus (strain 2308)</name>
    <dbReference type="NCBI Taxonomy" id="359391"/>
    <lineage>
        <taxon>Bacteria</taxon>
        <taxon>Pseudomonadati</taxon>
        <taxon>Pseudomonadota</taxon>
        <taxon>Alphaproteobacteria</taxon>
        <taxon>Hyphomicrobiales</taxon>
        <taxon>Brucellaceae</taxon>
        <taxon>Brucella/Ochrobactrum group</taxon>
        <taxon>Brucella</taxon>
    </lineage>
</organism>
<dbReference type="EMBL" id="AF226278">
    <property type="protein sequence ID" value="AAF73905.1"/>
    <property type="molecule type" value="Genomic_DNA"/>
</dbReference>
<dbReference type="EMBL" id="AM040265">
    <property type="protein sequence ID" value="CAJ12223.1"/>
    <property type="molecule type" value="Genomic_DNA"/>
</dbReference>
<dbReference type="RefSeq" id="WP_002966521.1">
    <property type="nucleotide sequence ID" value="NZ_KN046823.1"/>
</dbReference>
<dbReference type="SMR" id="Q2YJ83"/>
<dbReference type="STRING" id="359391.BAB2_0057"/>
<dbReference type="KEGG" id="bmf:BAB2_0057"/>
<dbReference type="HOGENOM" id="CLU_125850_0_0_5"/>
<dbReference type="BioCyc" id="MetaCyc:BAB_RS26630-MONOMER"/>
<dbReference type="Proteomes" id="UP000002719">
    <property type="component" value="Chromosome II"/>
</dbReference>
<dbReference type="GO" id="GO:0009279">
    <property type="term" value="C:cell outer membrane"/>
    <property type="evidence" value="ECO:0007669"/>
    <property type="project" value="UniProtKB-SubCell"/>
</dbReference>
<dbReference type="Gene3D" id="3.30.1330.60">
    <property type="entry name" value="OmpA-like domain"/>
    <property type="match status" value="1"/>
</dbReference>
<dbReference type="InterPro" id="IPR006665">
    <property type="entry name" value="OmpA-like"/>
</dbReference>
<dbReference type="InterPro" id="IPR036737">
    <property type="entry name" value="OmpA-like_sf"/>
</dbReference>
<dbReference type="Pfam" id="PF00691">
    <property type="entry name" value="OmpA"/>
    <property type="match status" value="1"/>
</dbReference>
<dbReference type="SUPFAM" id="SSF103088">
    <property type="entry name" value="OmpA-like"/>
    <property type="match status" value="1"/>
</dbReference>
<dbReference type="PROSITE" id="PS51123">
    <property type="entry name" value="OMPA_2"/>
    <property type="match status" value="1"/>
</dbReference>
<dbReference type="PROSITE" id="PS51257">
    <property type="entry name" value="PROKAR_LIPOPROTEIN"/>
    <property type="match status" value="1"/>
</dbReference>
<comment type="function">
    <text evidence="3">The virB operon is essential for intracellular survival and is not involved in the invasion process. Constitutes a major determinant of virulence in mice. This protein is essential for pathogenesis in mice but is not required for intracellular survival.</text>
</comment>
<comment type="subcellular location">
    <subcellularLocation>
        <location evidence="4">Cell outer membrane</location>
        <topology evidence="1">Lipid-anchor</topology>
    </subcellularLocation>
</comment>
<comment type="miscellaneous">
    <text>Transcription is turned on at the beginning of the stationary phase of vegetative growth.</text>
</comment>
<protein>
    <recommendedName>
        <fullName>Type IV secretion system putative outer membrane lipoprotein BAB2_0057</fullName>
    </recommendedName>
</protein>
<accession>Q2YJ83</accession>
<accession>Q57A25</accession>
<accession>Q9KIS3</accession>
<evidence type="ECO:0000255" key="1">
    <source>
        <dbReference type="PROSITE-ProRule" id="PRU00303"/>
    </source>
</evidence>
<evidence type="ECO:0000255" key="2">
    <source>
        <dbReference type="PROSITE-ProRule" id="PRU00473"/>
    </source>
</evidence>
<evidence type="ECO:0000269" key="3">
    <source>
    </source>
</evidence>
<evidence type="ECO:0000305" key="4"/>
<proteinExistence type="inferred from homology"/>
<gene>
    <name type="ordered locus">BAB2_0057</name>
</gene>
<name>YP57_BRUA2</name>
<keyword id="KW-0998">Cell outer membrane</keyword>
<keyword id="KW-0449">Lipoprotein</keyword>
<keyword id="KW-0472">Membrane</keyword>
<keyword id="KW-0564">Palmitate</keyword>
<keyword id="KW-1185">Reference proteome</keyword>
<keyword id="KW-0732">Signal</keyword>
<keyword id="KW-0843">Virulence</keyword>